<reference key="1">
    <citation type="journal article" date="2005" name="Infect. Immun.">
        <title>Whole-genome analyses of speciation events in pathogenic Brucellae.</title>
        <authorList>
            <person name="Chain P.S."/>
            <person name="Comerci D.J."/>
            <person name="Tolmasky M.E."/>
            <person name="Larimer F.W."/>
            <person name="Malfatti S.A."/>
            <person name="Vergez L.M."/>
            <person name="Aguero F."/>
            <person name="Land M.L."/>
            <person name="Ugalde R.A."/>
            <person name="Garcia E."/>
        </authorList>
    </citation>
    <scope>NUCLEOTIDE SEQUENCE [LARGE SCALE GENOMIC DNA]</scope>
    <source>
        <strain>2308</strain>
    </source>
</reference>
<evidence type="ECO:0000255" key="1">
    <source>
        <dbReference type="HAMAP-Rule" id="MF_00040"/>
    </source>
</evidence>
<protein>
    <recommendedName>
        <fullName evidence="1">Ribosome-recycling factor</fullName>
        <shortName evidence="1">RRF</shortName>
    </recommendedName>
    <alternativeName>
        <fullName evidence="1">Ribosome-releasing factor</fullName>
    </alternativeName>
</protein>
<keyword id="KW-0963">Cytoplasm</keyword>
<keyword id="KW-0648">Protein biosynthesis</keyword>
<keyword id="KW-1185">Reference proteome</keyword>
<dbReference type="EMBL" id="AM040264">
    <property type="protein sequence ID" value="CAJ11137.1"/>
    <property type="molecule type" value="Genomic_DNA"/>
</dbReference>
<dbReference type="RefSeq" id="WP_002964286.1">
    <property type="nucleotide sequence ID" value="NZ_KN046823.1"/>
</dbReference>
<dbReference type="SMR" id="Q2YRP7"/>
<dbReference type="STRING" id="359391.BAB1_1181"/>
<dbReference type="GeneID" id="97533591"/>
<dbReference type="KEGG" id="bmf:BAB1_1181"/>
<dbReference type="PATRIC" id="fig|359391.11.peg.79"/>
<dbReference type="HOGENOM" id="CLU_073981_2_0_5"/>
<dbReference type="PhylomeDB" id="Q2YRP7"/>
<dbReference type="Proteomes" id="UP000002719">
    <property type="component" value="Chromosome I"/>
</dbReference>
<dbReference type="GO" id="GO:0005829">
    <property type="term" value="C:cytosol"/>
    <property type="evidence" value="ECO:0007669"/>
    <property type="project" value="GOC"/>
</dbReference>
<dbReference type="GO" id="GO:0043023">
    <property type="term" value="F:ribosomal large subunit binding"/>
    <property type="evidence" value="ECO:0007669"/>
    <property type="project" value="TreeGrafter"/>
</dbReference>
<dbReference type="GO" id="GO:0002184">
    <property type="term" value="P:cytoplasmic translational termination"/>
    <property type="evidence" value="ECO:0007669"/>
    <property type="project" value="TreeGrafter"/>
</dbReference>
<dbReference type="CDD" id="cd00520">
    <property type="entry name" value="RRF"/>
    <property type="match status" value="1"/>
</dbReference>
<dbReference type="FunFam" id="1.10.132.20:FF:000001">
    <property type="entry name" value="Ribosome-recycling factor"/>
    <property type="match status" value="1"/>
</dbReference>
<dbReference type="FunFam" id="3.30.1360.40:FF:000001">
    <property type="entry name" value="Ribosome-recycling factor"/>
    <property type="match status" value="1"/>
</dbReference>
<dbReference type="Gene3D" id="3.30.1360.40">
    <property type="match status" value="1"/>
</dbReference>
<dbReference type="Gene3D" id="1.10.132.20">
    <property type="entry name" value="Ribosome-recycling factor"/>
    <property type="match status" value="1"/>
</dbReference>
<dbReference type="HAMAP" id="MF_00040">
    <property type="entry name" value="RRF"/>
    <property type="match status" value="1"/>
</dbReference>
<dbReference type="InterPro" id="IPR002661">
    <property type="entry name" value="Ribosome_recyc_fac"/>
</dbReference>
<dbReference type="InterPro" id="IPR023584">
    <property type="entry name" value="Ribosome_recyc_fac_dom"/>
</dbReference>
<dbReference type="InterPro" id="IPR036191">
    <property type="entry name" value="RRF_sf"/>
</dbReference>
<dbReference type="NCBIfam" id="TIGR00496">
    <property type="entry name" value="frr"/>
    <property type="match status" value="1"/>
</dbReference>
<dbReference type="PANTHER" id="PTHR20982:SF3">
    <property type="entry name" value="MITOCHONDRIAL RIBOSOME RECYCLING FACTOR PSEUDO 1"/>
    <property type="match status" value="1"/>
</dbReference>
<dbReference type="PANTHER" id="PTHR20982">
    <property type="entry name" value="RIBOSOME RECYCLING FACTOR"/>
    <property type="match status" value="1"/>
</dbReference>
<dbReference type="Pfam" id="PF01765">
    <property type="entry name" value="RRF"/>
    <property type="match status" value="1"/>
</dbReference>
<dbReference type="SUPFAM" id="SSF55194">
    <property type="entry name" value="Ribosome recycling factor, RRF"/>
    <property type="match status" value="1"/>
</dbReference>
<name>RRF_BRUA2</name>
<accession>Q2YRP7</accession>
<sequence>MSDAFDINDLKRRMEGAVNALKHDLGGLRTGRASASLLEPITIEAYGSTMPINQVANISVPESRMLSVSVWDKSMVGAVERAIRDSGLGLNPITDGMTLRIPLPELNEQRRKELVKIAHQYAEQGRIAARHVRRDGMDQLKKLEKDSVISQDESRVLSEKVQKLTDDTIAEMDKIVAVKEGEIMQV</sequence>
<proteinExistence type="inferred from homology"/>
<feature type="chain" id="PRO_1000003112" description="Ribosome-recycling factor">
    <location>
        <begin position="1"/>
        <end position="186"/>
    </location>
</feature>
<comment type="function">
    <text evidence="1">Responsible for the release of ribosomes from messenger RNA at the termination of protein biosynthesis. May increase the efficiency of translation by recycling ribosomes from one round of translation to another.</text>
</comment>
<comment type="subcellular location">
    <subcellularLocation>
        <location evidence="1">Cytoplasm</location>
    </subcellularLocation>
</comment>
<comment type="similarity">
    <text evidence="1">Belongs to the RRF family.</text>
</comment>
<organism>
    <name type="scientific">Brucella abortus (strain 2308)</name>
    <dbReference type="NCBI Taxonomy" id="359391"/>
    <lineage>
        <taxon>Bacteria</taxon>
        <taxon>Pseudomonadati</taxon>
        <taxon>Pseudomonadota</taxon>
        <taxon>Alphaproteobacteria</taxon>
        <taxon>Hyphomicrobiales</taxon>
        <taxon>Brucellaceae</taxon>
        <taxon>Brucella/Ochrobactrum group</taxon>
        <taxon>Brucella</taxon>
    </lineage>
</organism>
<gene>
    <name evidence="1" type="primary">frr</name>
    <name type="ordered locus">BAB1_1181</name>
</gene>